<accession>Q0I6D8</accession>
<keyword id="KW-0963">Cytoplasm</keyword>
<keyword id="KW-0274">FAD</keyword>
<keyword id="KW-0285">Flavoprotein</keyword>
<keyword id="KW-0520">NAD</keyword>
<keyword id="KW-1185">Reference proteome</keyword>
<keyword id="KW-0819">tRNA processing</keyword>
<sequence>MSFSPPPTEVFDVIVVGGGHAGCEAAITAARLGLSTALFTLNLDRIAWQPCNPAVGGPAKSQLVHEVDALGGVIGRLADATAIQKRVLNASRGPAVWALRAQTDKRHYSREMLQLLHHTPNLALREAMVTGLEVDGDPEPAGQARITGVRTYFGSVYGAQAVVLTAGTFLGGRIWVGHQSMSAGRAGEQAAEGLTDALKQLGFQTDRLKTGTPARVDRRSIALDQLEAQPSDAADRFFSFDPTAWASGEQMSCHITRTTAATHQLIKDNLHLTAIYGGIIDSKGPRYCPSIEDKIVRFADKDSHQIFLEPEGRDTPEIYVQGFSTGLPETIQLELLRTLPGLEQCVMLRPAYSVDYDYLPATQLKPSLETKRVRGLFSAGQLNGTTGYEEAAAQGLVAGLNAARLIGGQEPVHFPRENSYIGTMIDDLVSQDLREPYRVLTSRSEYRLVLRGDNADRRLTPLGRELGLIDDRRWQLFNDKLQAMEEEKQRLETVRLKVSDPVASTVEKESGAPIRGSITLADLLRRSGVHSSDLVRHRLADAELPLAVREGAEIDIKYSGYLQRQQQQIDQVKRQSLRKLPADLDYASIGTLSREAREKLTAIQPTTLGQATHIPGVSQADLTALLLWLELQKRRSQKSESLASSTNSR</sequence>
<proteinExistence type="inferred from homology"/>
<dbReference type="EMBL" id="CP000435">
    <property type="protein sequence ID" value="ABI47663.1"/>
    <property type="molecule type" value="Genomic_DNA"/>
</dbReference>
<dbReference type="RefSeq" id="WP_011620685.1">
    <property type="nucleotide sequence ID" value="NC_008319.1"/>
</dbReference>
<dbReference type="SMR" id="Q0I6D8"/>
<dbReference type="STRING" id="64471.sync_2796"/>
<dbReference type="KEGG" id="syg:sync_2796"/>
<dbReference type="eggNOG" id="COG0445">
    <property type="taxonomic scope" value="Bacteria"/>
</dbReference>
<dbReference type="HOGENOM" id="CLU_007831_2_2_3"/>
<dbReference type="OrthoDB" id="9815560at2"/>
<dbReference type="Proteomes" id="UP000001961">
    <property type="component" value="Chromosome"/>
</dbReference>
<dbReference type="GO" id="GO:0005737">
    <property type="term" value="C:cytoplasm"/>
    <property type="evidence" value="ECO:0007669"/>
    <property type="project" value="UniProtKB-SubCell"/>
</dbReference>
<dbReference type="GO" id="GO:0050660">
    <property type="term" value="F:flavin adenine dinucleotide binding"/>
    <property type="evidence" value="ECO:0007669"/>
    <property type="project" value="UniProtKB-UniRule"/>
</dbReference>
<dbReference type="GO" id="GO:0030488">
    <property type="term" value="P:tRNA methylation"/>
    <property type="evidence" value="ECO:0007669"/>
    <property type="project" value="TreeGrafter"/>
</dbReference>
<dbReference type="GO" id="GO:0002098">
    <property type="term" value="P:tRNA wobble uridine modification"/>
    <property type="evidence" value="ECO:0007669"/>
    <property type="project" value="InterPro"/>
</dbReference>
<dbReference type="FunFam" id="1.10.10.1800:FF:000001">
    <property type="entry name" value="tRNA uridine 5-carboxymethylaminomethyl modification enzyme MnmG"/>
    <property type="match status" value="1"/>
</dbReference>
<dbReference type="FunFam" id="1.10.150.570:FF:000001">
    <property type="entry name" value="tRNA uridine 5-carboxymethylaminomethyl modification enzyme MnmG"/>
    <property type="match status" value="1"/>
</dbReference>
<dbReference type="FunFam" id="3.50.50.60:FF:000094">
    <property type="entry name" value="tRNA uridine 5-carboxymethylaminomethyl modification enzyme MnmG"/>
    <property type="match status" value="1"/>
</dbReference>
<dbReference type="FunFam" id="3.50.50.60:FF:000119">
    <property type="entry name" value="tRNA uridine 5-carboxymethylaminomethyl modification enzyme MnmG"/>
    <property type="match status" value="1"/>
</dbReference>
<dbReference type="Gene3D" id="3.50.50.60">
    <property type="entry name" value="FAD/NAD(P)-binding domain"/>
    <property type="match status" value="2"/>
</dbReference>
<dbReference type="Gene3D" id="1.10.150.570">
    <property type="entry name" value="GidA associated domain, C-terminal subdomain"/>
    <property type="match status" value="1"/>
</dbReference>
<dbReference type="Gene3D" id="1.10.10.1800">
    <property type="entry name" value="tRNA uridine 5-carboxymethylaminomethyl modification enzyme MnmG/GidA"/>
    <property type="match status" value="1"/>
</dbReference>
<dbReference type="HAMAP" id="MF_00129">
    <property type="entry name" value="MnmG_GidA"/>
    <property type="match status" value="1"/>
</dbReference>
<dbReference type="InterPro" id="IPR036188">
    <property type="entry name" value="FAD/NAD-bd_sf"/>
</dbReference>
<dbReference type="InterPro" id="IPR049312">
    <property type="entry name" value="GIDA_C_N"/>
</dbReference>
<dbReference type="InterPro" id="IPR004416">
    <property type="entry name" value="MnmG"/>
</dbReference>
<dbReference type="InterPro" id="IPR002218">
    <property type="entry name" value="MnmG-rel"/>
</dbReference>
<dbReference type="InterPro" id="IPR020595">
    <property type="entry name" value="MnmG-rel_CS"/>
</dbReference>
<dbReference type="InterPro" id="IPR026904">
    <property type="entry name" value="MnmG_C"/>
</dbReference>
<dbReference type="InterPro" id="IPR047001">
    <property type="entry name" value="MnmG_C_subdom"/>
</dbReference>
<dbReference type="InterPro" id="IPR044920">
    <property type="entry name" value="MnmG_C_subdom_sf"/>
</dbReference>
<dbReference type="InterPro" id="IPR040131">
    <property type="entry name" value="MnmG_N"/>
</dbReference>
<dbReference type="NCBIfam" id="TIGR00136">
    <property type="entry name" value="mnmG_gidA"/>
    <property type="match status" value="1"/>
</dbReference>
<dbReference type="PANTHER" id="PTHR11806">
    <property type="entry name" value="GLUCOSE INHIBITED DIVISION PROTEIN A"/>
    <property type="match status" value="1"/>
</dbReference>
<dbReference type="PANTHER" id="PTHR11806:SF0">
    <property type="entry name" value="PROTEIN MTO1 HOMOLOG, MITOCHONDRIAL"/>
    <property type="match status" value="1"/>
</dbReference>
<dbReference type="Pfam" id="PF01134">
    <property type="entry name" value="GIDA"/>
    <property type="match status" value="1"/>
</dbReference>
<dbReference type="Pfam" id="PF21680">
    <property type="entry name" value="GIDA_C_1st"/>
    <property type="match status" value="1"/>
</dbReference>
<dbReference type="Pfam" id="PF13932">
    <property type="entry name" value="SAM_GIDA_C"/>
    <property type="match status" value="1"/>
</dbReference>
<dbReference type="SMART" id="SM01228">
    <property type="entry name" value="GIDA_assoc_3"/>
    <property type="match status" value="1"/>
</dbReference>
<dbReference type="SUPFAM" id="SSF51905">
    <property type="entry name" value="FAD/NAD(P)-binding domain"/>
    <property type="match status" value="1"/>
</dbReference>
<dbReference type="PROSITE" id="PS01280">
    <property type="entry name" value="GIDA_1"/>
    <property type="match status" value="1"/>
</dbReference>
<dbReference type="PROSITE" id="PS01281">
    <property type="entry name" value="GIDA_2"/>
    <property type="match status" value="1"/>
</dbReference>
<evidence type="ECO:0000255" key="1">
    <source>
        <dbReference type="HAMAP-Rule" id="MF_00129"/>
    </source>
</evidence>
<protein>
    <recommendedName>
        <fullName evidence="1">tRNA uridine 5-carboxymethylaminomethyl modification enzyme MnmG</fullName>
    </recommendedName>
    <alternativeName>
        <fullName evidence="1">Glucose-inhibited division protein A</fullName>
    </alternativeName>
</protein>
<feature type="chain" id="PRO_1000016701" description="tRNA uridine 5-carboxymethylaminomethyl modification enzyme MnmG">
    <location>
        <begin position="1"/>
        <end position="649"/>
    </location>
</feature>
<feature type="binding site" evidence="1">
    <location>
        <begin position="17"/>
        <end position="22"/>
    </location>
    <ligand>
        <name>FAD</name>
        <dbReference type="ChEBI" id="CHEBI:57692"/>
    </ligand>
</feature>
<feature type="binding site" evidence="1">
    <location>
        <begin position="284"/>
        <end position="298"/>
    </location>
    <ligand>
        <name>NAD(+)</name>
        <dbReference type="ChEBI" id="CHEBI:57540"/>
    </ligand>
</feature>
<name>MNMG_SYNS3</name>
<gene>
    <name evidence="1" type="primary">mnmG</name>
    <name evidence="1" type="synonym">gidA</name>
    <name type="ordered locus">sync_2796</name>
</gene>
<comment type="function">
    <text evidence="1">NAD-binding protein involved in the addition of a carboxymethylaminomethyl (cmnm) group at the wobble position (U34) of certain tRNAs, forming tRNA-cmnm(5)s(2)U34.</text>
</comment>
<comment type="cofactor">
    <cofactor evidence="1">
        <name>FAD</name>
        <dbReference type="ChEBI" id="CHEBI:57692"/>
    </cofactor>
</comment>
<comment type="subunit">
    <text evidence="1">Homodimer. Heterotetramer of two MnmE and two MnmG subunits.</text>
</comment>
<comment type="subcellular location">
    <subcellularLocation>
        <location evidence="1">Cytoplasm</location>
    </subcellularLocation>
</comment>
<comment type="similarity">
    <text evidence="1">Belongs to the MnmG family.</text>
</comment>
<reference key="1">
    <citation type="journal article" date="2006" name="Proc. Natl. Acad. Sci. U.S.A.">
        <title>Genome sequence of Synechococcus CC9311: insights into adaptation to a coastal environment.</title>
        <authorList>
            <person name="Palenik B."/>
            <person name="Ren Q."/>
            <person name="Dupont C.L."/>
            <person name="Myers G.S."/>
            <person name="Heidelberg J.F."/>
            <person name="Badger J.H."/>
            <person name="Madupu R."/>
            <person name="Nelson W.C."/>
            <person name="Brinkac L.M."/>
            <person name="Dodson R.J."/>
            <person name="Durkin A.S."/>
            <person name="Daugherty S.C."/>
            <person name="Sullivan S.A."/>
            <person name="Khouri H."/>
            <person name="Mohamoud Y."/>
            <person name="Halpin R."/>
            <person name="Paulsen I.T."/>
        </authorList>
    </citation>
    <scope>NUCLEOTIDE SEQUENCE [LARGE SCALE GENOMIC DNA]</scope>
    <source>
        <strain>CC9311</strain>
    </source>
</reference>
<organism>
    <name type="scientific">Synechococcus sp. (strain CC9311)</name>
    <dbReference type="NCBI Taxonomy" id="64471"/>
    <lineage>
        <taxon>Bacteria</taxon>
        <taxon>Bacillati</taxon>
        <taxon>Cyanobacteriota</taxon>
        <taxon>Cyanophyceae</taxon>
        <taxon>Synechococcales</taxon>
        <taxon>Synechococcaceae</taxon>
        <taxon>Synechococcus</taxon>
    </lineage>
</organism>